<dbReference type="EC" id="1.7.1.13" evidence="1"/>
<dbReference type="EMBL" id="CP000911">
    <property type="protein sequence ID" value="ABY38282.1"/>
    <property type="molecule type" value="Genomic_DNA"/>
</dbReference>
<dbReference type="RefSeq" id="WP_004688441.1">
    <property type="nucleotide sequence ID" value="NC_010169.1"/>
</dbReference>
<dbReference type="SMR" id="B0CGY1"/>
<dbReference type="GeneID" id="55590862"/>
<dbReference type="KEGG" id="bmt:BSUIS_A1231"/>
<dbReference type="HOGENOM" id="CLU_102489_0_1_5"/>
<dbReference type="UniPathway" id="UPA00392"/>
<dbReference type="Proteomes" id="UP000008545">
    <property type="component" value="Chromosome I"/>
</dbReference>
<dbReference type="GO" id="GO:0005737">
    <property type="term" value="C:cytoplasm"/>
    <property type="evidence" value="ECO:0007669"/>
    <property type="project" value="UniProtKB-SubCell"/>
</dbReference>
<dbReference type="GO" id="GO:0033739">
    <property type="term" value="F:preQ1 synthase activity"/>
    <property type="evidence" value="ECO:0007669"/>
    <property type="project" value="UniProtKB-UniRule"/>
</dbReference>
<dbReference type="GO" id="GO:0008616">
    <property type="term" value="P:queuosine biosynthetic process"/>
    <property type="evidence" value="ECO:0007669"/>
    <property type="project" value="UniProtKB-UniRule"/>
</dbReference>
<dbReference type="GO" id="GO:0006400">
    <property type="term" value="P:tRNA modification"/>
    <property type="evidence" value="ECO:0007669"/>
    <property type="project" value="UniProtKB-UniRule"/>
</dbReference>
<dbReference type="Gene3D" id="3.30.1130.10">
    <property type="match status" value="1"/>
</dbReference>
<dbReference type="HAMAP" id="MF_00818">
    <property type="entry name" value="QueF_type1"/>
    <property type="match status" value="1"/>
</dbReference>
<dbReference type="InterPro" id="IPR043133">
    <property type="entry name" value="GTP-CH-I_C/QueF"/>
</dbReference>
<dbReference type="InterPro" id="IPR050084">
    <property type="entry name" value="NADPH_dep_7-cyano-7-deazaG_red"/>
</dbReference>
<dbReference type="InterPro" id="IPR029500">
    <property type="entry name" value="QueF"/>
</dbReference>
<dbReference type="InterPro" id="IPR016856">
    <property type="entry name" value="QueF_type1"/>
</dbReference>
<dbReference type="NCBIfam" id="TIGR03139">
    <property type="entry name" value="QueF-II"/>
    <property type="match status" value="1"/>
</dbReference>
<dbReference type="PANTHER" id="PTHR34354">
    <property type="entry name" value="NADPH-DEPENDENT 7-CYANO-7-DEAZAGUANINE REDUCTASE"/>
    <property type="match status" value="1"/>
</dbReference>
<dbReference type="PANTHER" id="PTHR34354:SF1">
    <property type="entry name" value="NADPH-DEPENDENT 7-CYANO-7-DEAZAGUANINE REDUCTASE"/>
    <property type="match status" value="1"/>
</dbReference>
<dbReference type="Pfam" id="PF14489">
    <property type="entry name" value="QueF"/>
    <property type="match status" value="1"/>
</dbReference>
<dbReference type="SUPFAM" id="SSF55620">
    <property type="entry name" value="Tetrahydrobiopterin biosynthesis enzymes-like"/>
    <property type="match status" value="1"/>
</dbReference>
<evidence type="ECO:0000255" key="1">
    <source>
        <dbReference type="HAMAP-Rule" id="MF_00818"/>
    </source>
</evidence>
<reference key="1">
    <citation type="submission" date="2007-12" db="EMBL/GenBank/DDBJ databases">
        <title>Brucella suis ATCC 23445 whole genome shotgun sequencing project.</title>
        <authorList>
            <person name="Setubal J.C."/>
            <person name="Bowns C."/>
            <person name="Boyle S."/>
            <person name="Crasta O.R."/>
            <person name="Czar M.J."/>
            <person name="Dharmanolla C."/>
            <person name="Gillespie J.J."/>
            <person name="Kenyon R.W."/>
            <person name="Lu J."/>
            <person name="Mane S."/>
            <person name="Mohapatra S."/>
            <person name="Nagrani S."/>
            <person name="Purkayastha A."/>
            <person name="Rajasimha H.K."/>
            <person name="Shallom J.M."/>
            <person name="Shallom S."/>
            <person name="Shukla M."/>
            <person name="Snyder E.E."/>
            <person name="Sobral B.W."/>
            <person name="Wattam A.R."/>
            <person name="Will R."/>
            <person name="Williams K."/>
            <person name="Yoo H."/>
            <person name="Bruce D."/>
            <person name="Detter C."/>
            <person name="Munk C."/>
            <person name="Brettin T.S."/>
        </authorList>
    </citation>
    <scope>NUCLEOTIDE SEQUENCE [LARGE SCALE GENOMIC DNA]</scope>
    <source>
        <strain>ATCC 23445 / NCTC 10510</strain>
    </source>
</reference>
<name>QUEF_BRUSI</name>
<protein>
    <recommendedName>
        <fullName evidence="1">NADPH-dependent 7-cyano-7-deazaguanine reductase</fullName>
        <ecNumber evidence="1">1.7.1.13</ecNumber>
    </recommendedName>
    <alternativeName>
        <fullName evidence="1">7-cyano-7-carbaguanine reductase</fullName>
    </alternativeName>
    <alternativeName>
        <fullName evidence="1">NADPH-dependent nitrile oxidoreductase</fullName>
    </alternativeName>
    <alternativeName>
        <fullName evidence="1">PreQ(0) reductase</fullName>
    </alternativeName>
</protein>
<comment type="function">
    <text evidence="1">Catalyzes the NADPH-dependent reduction of 7-cyano-7-deazaguanine (preQ0) to 7-aminomethyl-7-deazaguanine (preQ1).</text>
</comment>
<comment type="catalytic activity">
    <reaction evidence="1">
        <text>7-aminomethyl-7-carbaguanine + 2 NADP(+) = 7-cyano-7-deazaguanine + 2 NADPH + 3 H(+)</text>
        <dbReference type="Rhea" id="RHEA:13409"/>
        <dbReference type="ChEBI" id="CHEBI:15378"/>
        <dbReference type="ChEBI" id="CHEBI:45075"/>
        <dbReference type="ChEBI" id="CHEBI:57783"/>
        <dbReference type="ChEBI" id="CHEBI:58349"/>
        <dbReference type="ChEBI" id="CHEBI:58703"/>
        <dbReference type="EC" id="1.7.1.13"/>
    </reaction>
</comment>
<comment type="pathway">
    <text evidence="1">tRNA modification; tRNA-queuosine biosynthesis.</text>
</comment>
<comment type="subcellular location">
    <subcellularLocation>
        <location evidence="1">Cytoplasm</location>
    </subcellularLocation>
</comment>
<comment type="similarity">
    <text evidence="1">Belongs to the GTP cyclohydrolase I family. QueF type 1 subfamily.</text>
</comment>
<sequence>MSENTIYSGLKQLGSHTDIPLTPEEAVLERVANPQEGTPYCVRFTAPEFTSLCPMTGQPDFAHLVIDYVPGKWLVESKSLKLFLFSFRNHGAFHEDCTVTIGKRLVDLLEPEWLRIGGYWYPRGGIPIDVFYQTGAAPLNVWIPEQGVANYRGRG</sequence>
<gene>
    <name evidence="1" type="primary">queF</name>
    <name type="ordered locus">BSUIS_A1231</name>
</gene>
<accession>B0CGY1</accession>
<organism>
    <name type="scientific">Brucella suis (strain ATCC 23445 / NCTC 10510)</name>
    <dbReference type="NCBI Taxonomy" id="470137"/>
    <lineage>
        <taxon>Bacteria</taxon>
        <taxon>Pseudomonadati</taxon>
        <taxon>Pseudomonadota</taxon>
        <taxon>Alphaproteobacteria</taxon>
        <taxon>Hyphomicrobiales</taxon>
        <taxon>Brucellaceae</taxon>
        <taxon>Brucella/Ochrobactrum group</taxon>
        <taxon>Brucella</taxon>
    </lineage>
</organism>
<feature type="chain" id="PRO_1000083835" description="NADPH-dependent 7-cyano-7-deazaguanine reductase">
    <location>
        <begin position="1"/>
        <end position="155"/>
    </location>
</feature>
<feature type="active site" description="Thioimide intermediate" evidence="1">
    <location>
        <position position="53"/>
    </location>
</feature>
<feature type="active site" description="Proton donor" evidence="1">
    <location>
        <position position="60"/>
    </location>
</feature>
<feature type="binding site" evidence="1">
    <location>
        <begin position="75"/>
        <end position="77"/>
    </location>
    <ligand>
        <name>substrate</name>
    </ligand>
</feature>
<feature type="binding site" evidence="1">
    <location>
        <begin position="94"/>
        <end position="95"/>
    </location>
    <ligand>
        <name>substrate</name>
    </ligand>
</feature>
<proteinExistence type="inferred from homology"/>
<keyword id="KW-0963">Cytoplasm</keyword>
<keyword id="KW-0521">NADP</keyword>
<keyword id="KW-0560">Oxidoreductase</keyword>
<keyword id="KW-0671">Queuosine biosynthesis</keyword>